<evidence type="ECO:0000250" key="1">
    <source>
        <dbReference type="UniProtKB" id="P04297"/>
    </source>
</evidence>
<evidence type="ECO:0000305" key="2"/>
<feature type="chain" id="PRO_0000448099" description="Truncated interferon antagonist OPG039">
    <location>
        <begin position="1"/>
        <end position="66"/>
    </location>
</feature>
<feature type="repeat" description="ANK">
    <location>
        <begin position="29"/>
        <end position="58"/>
    </location>
</feature>
<dbReference type="EMBL" id="L22579">
    <property type="protein sequence ID" value="AAA60769.1"/>
    <property type="molecule type" value="Genomic_DNA"/>
</dbReference>
<dbReference type="EMBL" id="U18337">
    <property type="protein sequence ID" value="AAA69326.1"/>
    <property type="molecule type" value="Genomic_DNA"/>
</dbReference>
<dbReference type="EMBL" id="U18338">
    <property type="protein sequence ID" value="AAA69367.1"/>
    <property type="molecule type" value="Genomic_DNA"/>
</dbReference>
<dbReference type="EMBL" id="U18340">
    <property type="protein sequence ID" value="AAA69432.1"/>
    <property type="molecule type" value="Genomic_DNA"/>
</dbReference>
<dbReference type="PIR" id="C72153">
    <property type="entry name" value="C72153"/>
</dbReference>
<dbReference type="PIR" id="T28459">
    <property type="entry name" value="T28459"/>
</dbReference>
<dbReference type="RefSeq" id="NP_042065.1">
    <property type="nucleotide sequence ID" value="NC_001611.1"/>
</dbReference>
<dbReference type="SMR" id="P0DTP9"/>
<dbReference type="GeneID" id="1486576"/>
<dbReference type="KEGG" id="vg:1486576"/>
<dbReference type="Proteomes" id="UP000119805">
    <property type="component" value="Segment"/>
</dbReference>
<dbReference type="Gene3D" id="1.25.40.20">
    <property type="entry name" value="Ankyrin repeat-containing domain"/>
    <property type="match status" value="1"/>
</dbReference>
<dbReference type="InterPro" id="IPR002110">
    <property type="entry name" value="Ankyrin_rpt"/>
</dbReference>
<dbReference type="InterPro" id="IPR036770">
    <property type="entry name" value="Ankyrin_rpt-contain_sf"/>
</dbReference>
<dbReference type="SUPFAM" id="SSF48403">
    <property type="entry name" value="Ankyrin repeat"/>
    <property type="match status" value="1"/>
</dbReference>
<dbReference type="PROSITE" id="PS50297">
    <property type="entry name" value="ANK_REP_REGION"/>
    <property type="match status" value="1"/>
</dbReference>
<dbReference type="PROSITE" id="PS50088">
    <property type="entry name" value="ANK_REPEAT"/>
    <property type="match status" value="1"/>
</dbReference>
<comment type="induction">
    <text evidence="1">Expressed in the early phase of the viral replicative cycle.</text>
</comment>
<comment type="miscellaneous">
    <text>This protein is homologous to the N-terminus of poxviridae interferon antagonist K1L. Presumably a premature stop codon mutated the gene in variola.</text>
</comment>
<comment type="similarity">
    <text evidence="2">Belongs to the orthopoxvirus OPG039 family.</text>
</comment>
<sequence>MDLSRINTRKSKQLKSFLSSKDTFKADVHGHSALYYAIADNNMRLVCTLLNAGALKNLLENEFPLH</sequence>
<accession>P0DTP9</accession>
<accession>P33797</accession>
<name>PG039_VARV</name>
<proteinExistence type="inferred from homology"/>
<organismHost>
    <name type="scientific">Homo sapiens</name>
    <name type="common">Human</name>
    <dbReference type="NCBI Taxonomy" id="9606"/>
</organismHost>
<protein>
    <recommendedName>
        <fullName>Truncated interferon antagonist OPG039</fullName>
    </recommendedName>
</protein>
<organism>
    <name type="scientific">Variola virus</name>
    <dbReference type="NCBI Taxonomy" id="10255"/>
    <lineage>
        <taxon>Viruses</taxon>
        <taxon>Varidnaviria</taxon>
        <taxon>Bamfordvirae</taxon>
        <taxon>Nucleocytoviricota</taxon>
        <taxon>Pokkesviricetes</taxon>
        <taxon>Chitovirales</taxon>
        <taxon>Poxviridae</taxon>
        <taxon>Chordopoxvirinae</taxon>
        <taxon>Orthopoxvirus</taxon>
    </lineage>
</organism>
<keyword id="KW-0040">ANK repeat</keyword>
<keyword id="KW-0244">Early protein</keyword>
<reference key="1">
    <citation type="journal article" date="1993" name="Nature">
        <title>Potential virulence determinants in terminal regions of variola smallpox virus genome.</title>
        <authorList>
            <person name="Massung R.F."/>
            <person name="Esposito J.J."/>
            <person name="Liu L.I."/>
            <person name="Qi J."/>
            <person name="Utterback T.R."/>
            <person name="Knight J.C."/>
            <person name="Aubin L."/>
            <person name="Yuran T.E."/>
            <person name="Parsons J.M."/>
            <person name="Loparev V.N."/>
            <person name="Selivanov N.A."/>
            <person name="Cavallaro K.F."/>
            <person name="Kerlavage A.R."/>
            <person name="Mahy B.W.J."/>
            <person name="Venter J.C."/>
        </authorList>
    </citation>
    <scope>NUCLEOTIDE SEQUENCE [GENOMIC DNA]</scope>
    <source>
        <strain>Bangladesh-1975</strain>
    </source>
</reference>
<reference key="2">
    <citation type="submission" date="1994-12" db="EMBL/GenBank/DDBJ databases">
        <authorList>
            <person name="Massung R.F."/>
            <person name="Loparev V.N."/>
            <person name="Knight J.C."/>
            <person name="Chizhikov V.E."/>
            <person name="Parsons J.M."/>
            <person name="Totmenin A.V."/>
            <person name="Shchelkunov S.N."/>
            <person name="Esposito J.J."/>
        </authorList>
    </citation>
    <scope>NUCLEOTIDE SEQUENCE [GENOMIC DNA]</scope>
    <source>
        <strain>Congo-1965</strain>
        <strain>Garcia-1966</strain>
        <strain>Somalia-1977</strain>
    </source>
</reference>
<gene>
    <name type="primary">OPG039</name>
    <name type="ORF">C1L</name>
</gene>